<reference key="1">
    <citation type="journal article" date="2003" name="Nat. Biotechnol.">
        <title>The genome sequence of the entomopathogenic bacterium Photorhabdus luminescens.</title>
        <authorList>
            <person name="Duchaud E."/>
            <person name="Rusniok C."/>
            <person name="Frangeul L."/>
            <person name="Buchrieser C."/>
            <person name="Givaudan A."/>
            <person name="Taourit S."/>
            <person name="Bocs S."/>
            <person name="Boursaux-Eude C."/>
            <person name="Chandler M."/>
            <person name="Charles J.-F."/>
            <person name="Dassa E."/>
            <person name="Derose R."/>
            <person name="Derzelle S."/>
            <person name="Freyssinet G."/>
            <person name="Gaudriault S."/>
            <person name="Medigue C."/>
            <person name="Lanois A."/>
            <person name="Powell K."/>
            <person name="Siguier P."/>
            <person name="Vincent R."/>
            <person name="Wingate V."/>
            <person name="Zouine M."/>
            <person name="Glaser P."/>
            <person name="Boemare N."/>
            <person name="Danchin A."/>
            <person name="Kunst F."/>
        </authorList>
    </citation>
    <scope>NUCLEOTIDE SEQUENCE [LARGE SCALE GENOMIC DNA]</scope>
    <source>
        <strain>DSM 15139 / CIP 105565 / TT01</strain>
    </source>
</reference>
<comment type="function">
    <text evidence="1">Involved in peptide bond synthesis. Alleviates ribosome stalling that occurs when 3 or more consecutive Pro residues or the sequence PPG is present in a protein, possibly by augmenting the peptidyl transferase activity of the ribosome. Modification of Lys-34 is required for alleviation.</text>
</comment>
<comment type="pathway">
    <text evidence="1">Protein biosynthesis; polypeptide chain elongation.</text>
</comment>
<comment type="subcellular location">
    <subcellularLocation>
        <location evidence="1">Cytoplasm</location>
    </subcellularLocation>
</comment>
<comment type="PTM">
    <text evidence="1">May be beta-lysylated on the epsilon-amino group of Lys-34 by the combined action of EpmA and EpmB, and then hydroxylated on the C5 position of the same residue by EpmC (if this protein is present). Lysylation is critical for the stimulatory effect of EF-P on peptide-bond formation. The lysylation moiety may extend toward the peptidyltransferase center and stabilize the terminal 3-CCA end of the tRNA. Hydroxylation of the C5 position on Lys-34 may allow additional potential stabilizing hydrogen-bond interactions with the P-tRNA.</text>
</comment>
<comment type="similarity">
    <text evidence="1">Belongs to the elongation factor P family.</text>
</comment>
<protein>
    <recommendedName>
        <fullName evidence="1">Elongation factor P</fullName>
        <shortName evidence="1">EF-P</shortName>
    </recommendedName>
</protein>
<evidence type="ECO:0000255" key="1">
    <source>
        <dbReference type="HAMAP-Rule" id="MF_00141"/>
    </source>
</evidence>
<gene>
    <name evidence="1" type="primary">efp</name>
    <name type="ordered locus">plu4130</name>
</gene>
<sequence>MATYSTNEFRSGLKIMLDGEPCAILESEFVKPGKGQAFARVRIRKLISGKLLEKTFKSTDSVESADVMDMNLTYLYNDGEFWHFMNNETFEQLAADEKAVGDNAKWLVEQAECILTLWNGQPISVTPPNFVELEITDTDPGLKGDTAGTGGKPATLNTGAVVKVPLFVQIGEVIKVDTRSGEYVSRVK</sequence>
<keyword id="KW-0963">Cytoplasm</keyword>
<keyword id="KW-0251">Elongation factor</keyword>
<keyword id="KW-0379">Hydroxylation</keyword>
<keyword id="KW-0648">Protein biosynthesis</keyword>
<keyword id="KW-1185">Reference proteome</keyword>
<organism>
    <name type="scientific">Photorhabdus laumondii subsp. laumondii (strain DSM 15139 / CIP 105565 / TT01)</name>
    <name type="common">Photorhabdus luminescens subsp. laumondii</name>
    <dbReference type="NCBI Taxonomy" id="243265"/>
    <lineage>
        <taxon>Bacteria</taxon>
        <taxon>Pseudomonadati</taxon>
        <taxon>Pseudomonadota</taxon>
        <taxon>Gammaproteobacteria</taxon>
        <taxon>Enterobacterales</taxon>
        <taxon>Morganellaceae</taxon>
        <taxon>Photorhabdus</taxon>
    </lineage>
</organism>
<name>EFP_PHOLL</name>
<feature type="chain" id="PRO_0000094303" description="Elongation factor P">
    <location>
        <begin position="1"/>
        <end position="188"/>
    </location>
</feature>
<feature type="modified residue" description="N6-(3,6-diaminohexanoyl)-5-hydroxylysine" evidence="1">
    <location>
        <position position="34"/>
    </location>
</feature>
<proteinExistence type="inferred from homology"/>
<accession>Q7MZX9</accession>
<dbReference type="EMBL" id="BX571872">
    <property type="protein sequence ID" value="CAE16502.1"/>
    <property type="molecule type" value="Genomic_DNA"/>
</dbReference>
<dbReference type="RefSeq" id="WP_011148246.1">
    <property type="nucleotide sequence ID" value="NC_005126.1"/>
</dbReference>
<dbReference type="SMR" id="Q7MZX9"/>
<dbReference type="STRING" id="243265.plu4130"/>
<dbReference type="GeneID" id="48850347"/>
<dbReference type="KEGG" id="plu:plu4130"/>
<dbReference type="eggNOG" id="COG0231">
    <property type="taxonomic scope" value="Bacteria"/>
</dbReference>
<dbReference type="HOGENOM" id="CLU_074944_0_0_6"/>
<dbReference type="OrthoDB" id="9801844at2"/>
<dbReference type="UniPathway" id="UPA00345"/>
<dbReference type="Proteomes" id="UP000002514">
    <property type="component" value="Chromosome"/>
</dbReference>
<dbReference type="GO" id="GO:0005737">
    <property type="term" value="C:cytoplasm"/>
    <property type="evidence" value="ECO:0007669"/>
    <property type="project" value="UniProtKB-SubCell"/>
</dbReference>
<dbReference type="GO" id="GO:0003746">
    <property type="term" value="F:translation elongation factor activity"/>
    <property type="evidence" value="ECO:0007669"/>
    <property type="project" value="UniProtKB-UniRule"/>
</dbReference>
<dbReference type="GO" id="GO:0043043">
    <property type="term" value="P:peptide biosynthetic process"/>
    <property type="evidence" value="ECO:0007669"/>
    <property type="project" value="InterPro"/>
</dbReference>
<dbReference type="CDD" id="cd04470">
    <property type="entry name" value="S1_EF-P_repeat_1"/>
    <property type="match status" value="1"/>
</dbReference>
<dbReference type="CDD" id="cd05794">
    <property type="entry name" value="S1_EF-P_repeat_2"/>
    <property type="match status" value="1"/>
</dbReference>
<dbReference type="FunFam" id="2.30.30.30:FF:000003">
    <property type="entry name" value="Elongation factor P"/>
    <property type="match status" value="1"/>
</dbReference>
<dbReference type="FunFam" id="2.40.50.140:FF:000004">
    <property type="entry name" value="Elongation factor P"/>
    <property type="match status" value="1"/>
</dbReference>
<dbReference type="FunFam" id="2.40.50.140:FF:000009">
    <property type="entry name" value="Elongation factor P"/>
    <property type="match status" value="1"/>
</dbReference>
<dbReference type="Gene3D" id="2.30.30.30">
    <property type="match status" value="1"/>
</dbReference>
<dbReference type="Gene3D" id="2.40.50.140">
    <property type="entry name" value="Nucleic acid-binding proteins"/>
    <property type="match status" value="2"/>
</dbReference>
<dbReference type="HAMAP" id="MF_00141">
    <property type="entry name" value="EF_P"/>
    <property type="match status" value="1"/>
</dbReference>
<dbReference type="InterPro" id="IPR015365">
    <property type="entry name" value="Elong-fact-P_C"/>
</dbReference>
<dbReference type="InterPro" id="IPR012340">
    <property type="entry name" value="NA-bd_OB-fold"/>
</dbReference>
<dbReference type="InterPro" id="IPR014722">
    <property type="entry name" value="Rib_uL2_dom2"/>
</dbReference>
<dbReference type="InterPro" id="IPR020599">
    <property type="entry name" value="Transl_elong_fac_P/YeiP"/>
</dbReference>
<dbReference type="InterPro" id="IPR013185">
    <property type="entry name" value="Transl_elong_KOW-like"/>
</dbReference>
<dbReference type="InterPro" id="IPR001059">
    <property type="entry name" value="Transl_elong_P/YeiP_cen"/>
</dbReference>
<dbReference type="InterPro" id="IPR013852">
    <property type="entry name" value="Transl_elong_P/YeiP_CS"/>
</dbReference>
<dbReference type="InterPro" id="IPR011768">
    <property type="entry name" value="Transl_elongation_fac_P"/>
</dbReference>
<dbReference type="InterPro" id="IPR008991">
    <property type="entry name" value="Translation_prot_SH3-like_sf"/>
</dbReference>
<dbReference type="NCBIfam" id="TIGR00038">
    <property type="entry name" value="efp"/>
    <property type="match status" value="1"/>
</dbReference>
<dbReference type="NCBIfam" id="NF001810">
    <property type="entry name" value="PRK00529.1"/>
    <property type="match status" value="1"/>
</dbReference>
<dbReference type="PANTHER" id="PTHR30053">
    <property type="entry name" value="ELONGATION FACTOR P"/>
    <property type="match status" value="1"/>
</dbReference>
<dbReference type="PANTHER" id="PTHR30053:SF12">
    <property type="entry name" value="ELONGATION FACTOR P (EF-P) FAMILY PROTEIN"/>
    <property type="match status" value="1"/>
</dbReference>
<dbReference type="Pfam" id="PF01132">
    <property type="entry name" value="EFP"/>
    <property type="match status" value="1"/>
</dbReference>
<dbReference type="Pfam" id="PF08207">
    <property type="entry name" value="EFP_N"/>
    <property type="match status" value="1"/>
</dbReference>
<dbReference type="Pfam" id="PF09285">
    <property type="entry name" value="Elong-fact-P_C"/>
    <property type="match status" value="1"/>
</dbReference>
<dbReference type="PIRSF" id="PIRSF005901">
    <property type="entry name" value="EF-P"/>
    <property type="match status" value="1"/>
</dbReference>
<dbReference type="SMART" id="SM01185">
    <property type="entry name" value="EFP"/>
    <property type="match status" value="1"/>
</dbReference>
<dbReference type="SMART" id="SM00841">
    <property type="entry name" value="Elong-fact-P_C"/>
    <property type="match status" value="1"/>
</dbReference>
<dbReference type="SUPFAM" id="SSF50249">
    <property type="entry name" value="Nucleic acid-binding proteins"/>
    <property type="match status" value="2"/>
</dbReference>
<dbReference type="SUPFAM" id="SSF50104">
    <property type="entry name" value="Translation proteins SH3-like domain"/>
    <property type="match status" value="1"/>
</dbReference>
<dbReference type="PROSITE" id="PS01275">
    <property type="entry name" value="EFP"/>
    <property type="match status" value="1"/>
</dbReference>